<dbReference type="EC" id="5.3.1.16" evidence="1"/>
<dbReference type="EMBL" id="CP000774">
    <property type="protein sequence ID" value="ABS62854.1"/>
    <property type="molecule type" value="Genomic_DNA"/>
</dbReference>
<dbReference type="RefSeq" id="WP_012110122.1">
    <property type="nucleotide sequence ID" value="NC_009719.1"/>
</dbReference>
<dbReference type="SMR" id="A7HSH1"/>
<dbReference type="STRING" id="402881.Plav_1234"/>
<dbReference type="KEGG" id="pla:Plav_1234"/>
<dbReference type="eggNOG" id="COG0106">
    <property type="taxonomic scope" value="Bacteria"/>
</dbReference>
<dbReference type="HOGENOM" id="CLU_048577_1_1_5"/>
<dbReference type="OrthoDB" id="9807749at2"/>
<dbReference type="UniPathway" id="UPA00031">
    <property type="reaction ID" value="UER00009"/>
</dbReference>
<dbReference type="Proteomes" id="UP000006377">
    <property type="component" value="Chromosome"/>
</dbReference>
<dbReference type="GO" id="GO:0005737">
    <property type="term" value="C:cytoplasm"/>
    <property type="evidence" value="ECO:0007669"/>
    <property type="project" value="UniProtKB-SubCell"/>
</dbReference>
<dbReference type="GO" id="GO:0003949">
    <property type="term" value="F:1-(5-phosphoribosyl)-5-[(5-phosphoribosylamino)methylideneamino]imidazole-4-carboxamide isomerase activity"/>
    <property type="evidence" value="ECO:0007669"/>
    <property type="project" value="UniProtKB-UniRule"/>
</dbReference>
<dbReference type="GO" id="GO:0000105">
    <property type="term" value="P:L-histidine biosynthetic process"/>
    <property type="evidence" value="ECO:0007669"/>
    <property type="project" value="UniProtKB-UniRule"/>
</dbReference>
<dbReference type="GO" id="GO:0000162">
    <property type="term" value="P:L-tryptophan biosynthetic process"/>
    <property type="evidence" value="ECO:0007669"/>
    <property type="project" value="TreeGrafter"/>
</dbReference>
<dbReference type="CDD" id="cd04732">
    <property type="entry name" value="HisA"/>
    <property type="match status" value="1"/>
</dbReference>
<dbReference type="FunFam" id="3.20.20.70:FF:000009">
    <property type="entry name" value="1-(5-phosphoribosyl)-5-[(5-phosphoribosylamino)methylideneamino] imidazole-4-carboxamide isomerase"/>
    <property type="match status" value="1"/>
</dbReference>
<dbReference type="Gene3D" id="3.20.20.70">
    <property type="entry name" value="Aldolase class I"/>
    <property type="match status" value="1"/>
</dbReference>
<dbReference type="HAMAP" id="MF_01014">
    <property type="entry name" value="HisA"/>
    <property type="match status" value="1"/>
</dbReference>
<dbReference type="InterPro" id="IPR013785">
    <property type="entry name" value="Aldolase_TIM"/>
</dbReference>
<dbReference type="InterPro" id="IPR006062">
    <property type="entry name" value="His_biosynth"/>
</dbReference>
<dbReference type="InterPro" id="IPR006063">
    <property type="entry name" value="HisA_bact_arch"/>
</dbReference>
<dbReference type="InterPro" id="IPR044524">
    <property type="entry name" value="Isoase_HisA-like"/>
</dbReference>
<dbReference type="InterPro" id="IPR023016">
    <property type="entry name" value="Isoase_HisA-like_bact"/>
</dbReference>
<dbReference type="InterPro" id="IPR011060">
    <property type="entry name" value="RibuloseP-bd_barrel"/>
</dbReference>
<dbReference type="NCBIfam" id="TIGR00007">
    <property type="entry name" value="1-(5-phosphoribosyl)-5-[(5-phosphoribosylamino)methylideneamino]imidazole-4-carboxamide isomerase"/>
    <property type="match status" value="1"/>
</dbReference>
<dbReference type="NCBIfam" id="NF010112">
    <property type="entry name" value="PRK13585.1"/>
    <property type="match status" value="1"/>
</dbReference>
<dbReference type="PANTHER" id="PTHR43090">
    <property type="entry name" value="1-(5-PHOSPHORIBOSYL)-5-[(5-PHOSPHORIBOSYLAMINO)METHYLIDENEAMINO] IMIDAZOLE-4-CARBOXAMIDE ISOMERASE"/>
    <property type="match status" value="1"/>
</dbReference>
<dbReference type="PANTHER" id="PTHR43090:SF2">
    <property type="entry name" value="1-(5-PHOSPHORIBOSYL)-5-[(5-PHOSPHORIBOSYLAMINO)METHYLIDENEAMINO] IMIDAZOLE-4-CARBOXAMIDE ISOMERASE"/>
    <property type="match status" value="1"/>
</dbReference>
<dbReference type="Pfam" id="PF00977">
    <property type="entry name" value="His_biosynth"/>
    <property type="match status" value="1"/>
</dbReference>
<dbReference type="SUPFAM" id="SSF51366">
    <property type="entry name" value="Ribulose-phoshate binding barrel"/>
    <property type="match status" value="1"/>
</dbReference>
<organism>
    <name type="scientific">Parvibaculum lavamentivorans (strain DS-1 / DSM 13023 / NCIMB 13966)</name>
    <dbReference type="NCBI Taxonomy" id="402881"/>
    <lineage>
        <taxon>Bacteria</taxon>
        <taxon>Pseudomonadati</taxon>
        <taxon>Pseudomonadota</taxon>
        <taxon>Alphaproteobacteria</taxon>
        <taxon>Hyphomicrobiales</taxon>
        <taxon>Parvibaculaceae</taxon>
        <taxon>Parvibaculum</taxon>
    </lineage>
</organism>
<sequence length="243" mass="25365">MILFPAIDLKDGQCVRLVHGLMDQATVFNDDPAAQARAFEEAGFEYIHLVDLNGAFEGKPVNAAAVESILAAISIPAQLGGGIRDLATIEMWLEKGVRRVIIGTAAVKNPALVIEACRKFPGRIAVGLDAKGGRVATEGWADVSDLTVLDMAGRFEDAGVAAIIYTDIDRDGALQGLNIEATVSLADAISIPVIASGGLSSIEDLKKLIAANCSGIEGAISGRALYDGRLDPSEALKLLRGVA</sequence>
<accession>A7HSH1</accession>
<keyword id="KW-0028">Amino-acid biosynthesis</keyword>
<keyword id="KW-0963">Cytoplasm</keyword>
<keyword id="KW-0368">Histidine biosynthesis</keyword>
<keyword id="KW-0413">Isomerase</keyword>
<keyword id="KW-1185">Reference proteome</keyword>
<reference key="1">
    <citation type="journal article" date="2011" name="Stand. Genomic Sci.">
        <title>Complete genome sequence of Parvibaculum lavamentivorans type strain (DS-1(T)).</title>
        <authorList>
            <person name="Schleheck D."/>
            <person name="Weiss M."/>
            <person name="Pitluck S."/>
            <person name="Bruce D."/>
            <person name="Land M.L."/>
            <person name="Han S."/>
            <person name="Saunders E."/>
            <person name="Tapia R."/>
            <person name="Detter C."/>
            <person name="Brettin T."/>
            <person name="Han J."/>
            <person name="Woyke T."/>
            <person name="Goodwin L."/>
            <person name="Pennacchio L."/>
            <person name="Nolan M."/>
            <person name="Cook A.M."/>
            <person name="Kjelleberg S."/>
            <person name="Thomas T."/>
        </authorList>
    </citation>
    <scope>NUCLEOTIDE SEQUENCE [LARGE SCALE GENOMIC DNA]</scope>
    <source>
        <strain>DS-1 / DSM 13023 / NCIMB 13966</strain>
    </source>
</reference>
<feature type="chain" id="PRO_1000072935" description="1-(5-phosphoribosyl)-5-[(5-phosphoribosylamino)methylideneamino] imidazole-4-carboxamide isomerase">
    <location>
        <begin position="1"/>
        <end position="243"/>
    </location>
</feature>
<feature type="active site" description="Proton acceptor" evidence="1">
    <location>
        <position position="8"/>
    </location>
</feature>
<feature type="active site" description="Proton donor" evidence="1">
    <location>
        <position position="129"/>
    </location>
</feature>
<comment type="catalytic activity">
    <reaction evidence="1">
        <text>1-(5-phospho-beta-D-ribosyl)-5-[(5-phospho-beta-D-ribosylamino)methylideneamino]imidazole-4-carboxamide = 5-[(5-phospho-1-deoxy-D-ribulos-1-ylimino)methylamino]-1-(5-phospho-beta-D-ribosyl)imidazole-4-carboxamide</text>
        <dbReference type="Rhea" id="RHEA:15469"/>
        <dbReference type="ChEBI" id="CHEBI:58435"/>
        <dbReference type="ChEBI" id="CHEBI:58525"/>
        <dbReference type="EC" id="5.3.1.16"/>
    </reaction>
</comment>
<comment type="pathway">
    <text evidence="1">Amino-acid biosynthesis; L-histidine biosynthesis; L-histidine from 5-phospho-alpha-D-ribose 1-diphosphate: step 4/9.</text>
</comment>
<comment type="subcellular location">
    <subcellularLocation>
        <location evidence="1">Cytoplasm</location>
    </subcellularLocation>
</comment>
<comment type="similarity">
    <text evidence="1">Belongs to the HisA/HisF family.</text>
</comment>
<gene>
    <name evidence="1" type="primary">hisA</name>
    <name type="ordered locus">Plav_1234</name>
</gene>
<proteinExistence type="inferred from homology"/>
<evidence type="ECO:0000255" key="1">
    <source>
        <dbReference type="HAMAP-Rule" id="MF_01014"/>
    </source>
</evidence>
<name>HIS4_PARL1</name>
<protein>
    <recommendedName>
        <fullName evidence="1">1-(5-phosphoribosyl)-5-[(5-phosphoribosylamino)methylideneamino] imidazole-4-carboxamide isomerase</fullName>
        <ecNumber evidence="1">5.3.1.16</ecNumber>
    </recommendedName>
    <alternativeName>
        <fullName evidence="1">Phosphoribosylformimino-5-aminoimidazole carboxamide ribotide isomerase</fullName>
    </alternativeName>
</protein>